<accession>Q8EB78</accession>
<keyword id="KW-0963">Cytoplasm</keyword>
<keyword id="KW-0227">DNA damage</keyword>
<keyword id="KW-0234">DNA repair</keyword>
<keyword id="KW-0378">Hydrolase</keyword>
<keyword id="KW-1185">Reference proteome</keyword>
<proteinExistence type="inferred from homology"/>
<sequence length="218" mass="24434">MTWPAFIDHQRTQPYYQQLIAFVNQERQVGKVIYPPKEDVFNAFKTTPLEQVRVVLIGQDPYHGPDQAHGLCFSVKRGVKAPPSLANMYKELVNDIPGFHIPNHGDLTQWAEQGILMLNTVLTVEQGQAHSHANAGWEIFTTEALKLLNAQERPIIFVLWGSHAIKKGAVITAPQHQILSGPHPSPLSAYRGFFGCGHFSKVNQLLMARGEAPIQWQI</sequence>
<protein>
    <recommendedName>
        <fullName evidence="1">Uracil-DNA glycosylase</fullName>
        <shortName evidence="1">UDG</shortName>
        <ecNumber evidence="1">3.2.2.27</ecNumber>
    </recommendedName>
</protein>
<reference key="1">
    <citation type="journal article" date="2002" name="Nat. Biotechnol.">
        <title>Genome sequence of the dissimilatory metal ion-reducing bacterium Shewanella oneidensis.</title>
        <authorList>
            <person name="Heidelberg J.F."/>
            <person name="Paulsen I.T."/>
            <person name="Nelson K.E."/>
            <person name="Gaidos E.J."/>
            <person name="Nelson W.C."/>
            <person name="Read T.D."/>
            <person name="Eisen J.A."/>
            <person name="Seshadri R."/>
            <person name="Ward N.L."/>
            <person name="Methe B.A."/>
            <person name="Clayton R.A."/>
            <person name="Meyer T."/>
            <person name="Tsapin A."/>
            <person name="Scott J."/>
            <person name="Beanan M.J."/>
            <person name="Brinkac L.M."/>
            <person name="Daugherty S.C."/>
            <person name="DeBoy R.T."/>
            <person name="Dodson R.J."/>
            <person name="Durkin A.S."/>
            <person name="Haft D.H."/>
            <person name="Kolonay J.F."/>
            <person name="Madupu R."/>
            <person name="Peterson J.D."/>
            <person name="Umayam L.A."/>
            <person name="White O."/>
            <person name="Wolf A.M."/>
            <person name="Vamathevan J.J."/>
            <person name="Weidman J.F."/>
            <person name="Impraim M."/>
            <person name="Lee K."/>
            <person name="Berry K.J."/>
            <person name="Lee C."/>
            <person name="Mueller J."/>
            <person name="Khouri H.M."/>
            <person name="Gill J."/>
            <person name="Utterback T.R."/>
            <person name="McDonald L.A."/>
            <person name="Feldblyum T.V."/>
            <person name="Smith H.O."/>
            <person name="Venter J.C."/>
            <person name="Nealson K.H."/>
            <person name="Fraser C.M."/>
        </authorList>
    </citation>
    <scope>NUCLEOTIDE SEQUENCE [LARGE SCALE GENOMIC DNA]</scope>
    <source>
        <strain>ATCC 700550 / JCM 31522 / CIP 106686 / LMG 19005 / NCIMB 14063 / MR-1</strain>
    </source>
</reference>
<comment type="function">
    <text evidence="1">Excises uracil residues from the DNA which can arise as a result of misincorporation of dUMP residues by DNA polymerase or due to deamination of cytosine.</text>
</comment>
<comment type="catalytic activity">
    <reaction evidence="1">
        <text>Hydrolyzes single-stranded DNA or mismatched double-stranded DNA and polynucleotides, releasing free uracil.</text>
        <dbReference type="EC" id="3.2.2.27"/>
    </reaction>
</comment>
<comment type="subcellular location">
    <subcellularLocation>
        <location evidence="1">Cytoplasm</location>
    </subcellularLocation>
</comment>
<comment type="similarity">
    <text evidence="1">Belongs to the uracil-DNA glycosylase (UDG) superfamily. UNG family.</text>
</comment>
<evidence type="ECO:0000255" key="1">
    <source>
        <dbReference type="HAMAP-Rule" id="MF_00148"/>
    </source>
</evidence>
<name>UNG_SHEON</name>
<feature type="chain" id="PRO_0000176135" description="Uracil-DNA glycosylase">
    <location>
        <begin position="1"/>
        <end position="218"/>
    </location>
</feature>
<feature type="active site" description="Proton acceptor" evidence="1">
    <location>
        <position position="60"/>
    </location>
</feature>
<gene>
    <name evidence="1" type="primary">ung</name>
    <name type="ordered locus">SO_3654</name>
</gene>
<dbReference type="EC" id="3.2.2.27" evidence="1"/>
<dbReference type="EMBL" id="AE014299">
    <property type="protein sequence ID" value="AAN56640.1"/>
    <property type="molecule type" value="Genomic_DNA"/>
</dbReference>
<dbReference type="RefSeq" id="NP_719196.1">
    <property type="nucleotide sequence ID" value="NC_004347.2"/>
</dbReference>
<dbReference type="SMR" id="Q8EB78"/>
<dbReference type="STRING" id="211586.SO_3654"/>
<dbReference type="PaxDb" id="211586-SO_3654"/>
<dbReference type="KEGG" id="son:SO_3654"/>
<dbReference type="PATRIC" id="fig|211586.12.peg.3542"/>
<dbReference type="eggNOG" id="COG0692">
    <property type="taxonomic scope" value="Bacteria"/>
</dbReference>
<dbReference type="HOGENOM" id="CLU_032162_3_0_6"/>
<dbReference type="OrthoDB" id="9804372at2"/>
<dbReference type="PhylomeDB" id="Q8EB78"/>
<dbReference type="BioCyc" id="SONE211586:G1GMP-3402-MONOMER"/>
<dbReference type="Proteomes" id="UP000008186">
    <property type="component" value="Chromosome"/>
</dbReference>
<dbReference type="GO" id="GO:0005737">
    <property type="term" value="C:cytoplasm"/>
    <property type="evidence" value="ECO:0007669"/>
    <property type="project" value="UniProtKB-SubCell"/>
</dbReference>
<dbReference type="GO" id="GO:0004844">
    <property type="term" value="F:uracil DNA N-glycosylase activity"/>
    <property type="evidence" value="ECO:0007669"/>
    <property type="project" value="UniProtKB-UniRule"/>
</dbReference>
<dbReference type="GO" id="GO:0097510">
    <property type="term" value="P:base-excision repair, AP site formation via deaminated base removal"/>
    <property type="evidence" value="ECO:0000318"/>
    <property type="project" value="GO_Central"/>
</dbReference>
<dbReference type="CDD" id="cd10027">
    <property type="entry name" value="UDG-F1-like"/>
    <property type="match status" value="1"/>
</dbReference>
<dbReference type="FunFam" id="3.40.470.10:FF:000001">
    <property type="entry name" value="Uracil-DNA glycosylase"/>
    <property type="match status" value="1"/>
</dbReference>
<dbReference type="Gene3D" id="3.40.470.10">
    <property type="entry name" value="Uracil-DNA glycosylase-like domain"/>
    <property type="match status" value="1"/>
</dbReference>
<dbReference type="HAMAP" id="MF_00148">
    <property type="entry name" value="UDG"/>
    <property type="match status" value="1"/>
</dbReference>
<dbReference type="InterPro" id="IPR002043">
    <property type="entry name" value="UDG_fam1"/>
</dbReference>
<dbReference type="InterPro" id="IPR018085">
    <property type="entry name" value="Ura-DNA_Glyclase_AS"/>
</dbReference>
<dbReference type="InterPro" id="IPR005122">
    <property type="entry name" value="Uracil-DNA_glycosylase-like"/>
</dbReference>
<dbReference type="InterPro" id="IPR036895">
    <property type="entry name" value="Uracil-DNA_glycosylase-like_sf"/>
</dbReference>
<dbReference type="NCBIfam" id="NF003588">
    <property type="entry name" value="PRK05254.1-1"/>
    <property type="match status" value="1"/>
</dbReference>
<dbReference type="NCBIfam" id="NF003589">
    <property type="entry name" value="PRK05254.1-2"/>
    <property type="match status" value="1"/>
</dbReference>
<dbReference type="NCBIfam" id="NF003591">
    <property type="entry name" value="PRK05254.1-4"/>
    <property type="match status" value="1"/>
</dbReference>
<dbReference type="NCBIfam" id="NF003592">
    <property type="entry name" value="PRK05254.1-5"/>
    <property type="match status" value="1"/>
</dbReference>
<dbReference type="NCBIfam" id="TIGR00628">
    <property type="entry name" value="ung"/>
    <property type="match status" value="1"/>
</dbReference>
<dbReference type="PANTHER" id="PTHR11264">
    <property type="entry name" value="URACIL-DNA GLYCOSYLASE"/>
    <property type="match status" value="1"/>
</dbReference>
<dbReference type="PANTHER" id="PTHR11264:SF0">
    <property type="entry name" value="URACIL-DNA GLYCOSYLASE"/>
    <property type="match status" value="1"/>
</dbReference>
<dbReference type="Pfam" id="PF03167">
    <property type="entry name" value="UDG"/>
    <property type="match status" value="1"/>
</dbReference>
<dbReference type="SMART" id="SM00986">
    <property type="entry name" value="UDG"/>
    <property type="match status" value="1"/>
</dbReference>
<dbReference type="SMART" id="SM00987">
    <property type="entry name" value="UreE_C"/>
    <property type="match status" value="1"/>
</dbReference>
<dbReference type="SUPFAM" id="SSF52141">
    <property type="entry name" value="Uracil-DNA glycosylase-like"/>
    <property type="match status" value="1"/>
</dbReference>
<dbReference type="PROSITE" id="PS00130">
    <property type="entry name" value="U_DNA_GLYCOSYLASE"/>
    <property type="match status" value="1"/>
</dbReference>
<organism>
    <name type="scientific">Shewanella oneidensis (strain ATCC 700550 / JCM 31522 / CIP 106686 / LMG 19005 / NCIMB 14063 / MR-1)</name>
    <dbReference type="NCBI Taxonomy" id="211586"/>
    <lineage>
        <taxon>Bacteria</taxon>
        <taxon>Pseudomonadati</taxon>
        <taxon>Pseudomonadota</taxon>
        <taxon>Gammaproteobacteria</taxon>
        <taxon>Alteromonadales</taxon>
        <taxon>Shewanellaceae</taxon>
        <taxon>Shewanella</taxon>
    </lineage>
</organism>